<sequence>MKATGIVVEYNPFHNGHKLHLNKARELTQADVVIAVMSGSFVQRGEPAIIPKWERAKMALSAGVDMVVELPVSFATQHATIFAEEAVRILDAIHIDTLFFGSEHGVAEDFTFAAKKVVENEARFDEAIQLALVDKKTSYARAYTEAFKKLFGQNLLDITKPNNILGFHYALAVQKQNPSISLQTIPREHAGYHDEEASHDQIASATAIRKLILAGKLEEASHYLPASSIDILRNYEGPFLSWTDYWSFLQYRLIQASTEELEGIRGVSEGIQNRMQQAATKAQNFSDFIELTKTKRYSNARLQRTALQILLNAKSKASSPYIRILGMNKTGQKYLSLHKKNISLPIVTTVSKAPPGLLEEELRATNIYTLVKKLENYQAGDFHIPPILTL</sequence>
<comment type="function">
    <text evidence="1">Catalyzes the formation of N(4)-acetylcytidine (ac(4)C) at the wobble position of elongator tRNA(Met), using acetate and ATP as substrates. First activates an acetate ion to form acetyladenylate (Ac-AMP) and then transfers the acetyl group to tRNA to form ac(4)C34.</text>
</comment>
<comment type="catalytic activity">
    <reaction evidence="1">
        <text>cytidine(34) in elongator tRNA(Met) + acetate + ATP = N(4)-acetylcytidine(34) in elongator tRNA(Met) + AMP + diphosphate</text>
        <dbReference type="Rhea" id="RHEA:58144"/>
        <dbReference type="Rhea" id="RHEA-COMP:10693"/>
        <dbReference type="Rhea" id="RHEA-COMP:10694"/>
        <dbReference type="ChEBI" id="CHEBI:30089"/>
        <dbReference type="ChEBI" id="CHEBI:30616"/>
        <dbReference type="ChEBI" id="CHEBI:33019"/>
        <dbReference type="ChEBI" id="CHEBI:74900"/>
        <dbReference type="ChEBI" id="CHEBI:82748"/>
        <dbReference type="ChEBI" id="CHEBI:456215"/>
    </reaction>
</comment>
<comment type="subcellular location">
    <subcellularLocation>
        <location evidence="1">Cytoplasm</location>
    </subcellularLocation>
</comment>
<comment type="similarity">
    <text evidence="1">Belongs to the TmcAL family.</text>
</comment>
<gene>
    <name evidence="1" type="primary">tmcAL</name>
    <name type="ordered locus">lmo2049</name>
</gene>
<organism>
    <name type="scientific">Listeria monocytogenes serovar 1/2a (strain ATCC BAA-679 / EGD-e)</name>
    <dbReference type="NCBI Taxonomy" id="169963"/>
    <lineage>
        <taxon>Bacteria</taxon>
        <taxon>Bacillati</taxon>
        <taxon>Bacillota</taxon>
        <taxon>Bacilli</taxon>
        <taxon>Bacillales</taxon>
        <taxon>Listeriaceae</taxon>
        <taxon>Listeria</taxon>
    </lineage>
</organism>
<proteinExistence type="inferred from homology"/>
<keyword id="KW-0067">ATP-binding</keyword>
<keyword id="KW-0963">Cytoplasm</keyword>
<keyword id="KW-0436">Ligase</keyword>
<keyword id="KW-0547">Nucleotide-binding</keyword>
<keyword id="KW-1185">Reference proteome</keyword>
<keyword id="KW-0694">RNA-binding</keyword>
<keyword id="KW-0819">tRNA processing</keyword>
<keyword id="KW-0820">tRNA-binding</keyword>
<name>TMCAL_LISMO</name>
<feature type="chain" id="PRO_0000147173" description="tRNA(Met) cytidine acetate ligase">
    <location>
        <begin position="1"/>
        <end position="390"/>
    </location>
</feature>
<feature type="binding site" evidence="1">
    <location>
        <begin position="7"/>
        <end position="20"/>
    </location>
    <ligand>
        <name>ATP</name>
        <dbReference type="ChEBI" id="CHEBI:30616"/>
    </ligand>
</feature>
<feature type="binding site" evidence="1">
    <location>
        <position position="101"/>
    </location>
    <ligand>
        <name>ATP</name>
        <dbReference type="ChEBI" id="CHEBI:30616"/>
    </ligand>
</feature>
<feature type="binding site" evidence="1">
    <location>
        <position position="162"/>
    </location>
    <ligand>
        <name>ATP</name>
        <dbReference type="ChEBI" id="CHEBI:30616"/>
    </ligand>
</feature>
<feature type="binding site" evidence="1">
    <location>
        <position position="187"/>
    </location>
    <ligand>
        <name>ATP</name>
        <dbReference type="ChEBI" id="CHEBI:30616"/>
    </ligand>
</feature>
<reference key="1">
    <citation type="journal article" date="2001" name="Science">
        <title>Comparative genomics of Listeria species.</title>
        <authorList>
            <person name="Glaser P."/>
            <person name="Frangeul L."/>
            <person name="Buchrieser C."/>
            <person name="Rusniok C."/>
            <person name="Amend A."/>
            <person name="Baquero F."/>
            <person name="Berche P."/>
            <person name="Bloecker H."/>
            <person name="Brandt P."/>
            <person name="Chakraborty T."/>
            <person name="Charbit A."/>
            <person name="Chetouani F."/>
            <person name="Couve E."/>
            <person name="de Daruvar A."/>
            <person name="Dehoux P."/>
            <person name="Domann E."/>
            <person name="Dominguez-Bernal G."/>
            <person name="Duchaud E."/>
            <person name="Durant L."/>
            <person name="Dussurget O."/>
            <person name="Entian K.-D."/>
            <person name="Fsihi H."/>
            <person name="Garcia-del Portillo F."/>
            <person name="Garrido P."/>
            <person name="Gautier L."/>
            <person name="Goebel W."/>
            <person name="Gomez-Lopez N."/>
            <person name="Hain T."/>
            <person name="Hauf J."/>
            <person name="Jackson D."/>
            <person name="Jones L.-M."/>
            <person name="Kaerst U."/>
            <person name="Kreft J."/>
            <person name="Kuhn M."/>
            <person name="Kunst F."/>
            <person name="Kurapkat G."/>
            <person name="Madueno E."/>
            <person name="Maitournam A."/>
            <person name="Mata Vicente J."/>
            <person name="Ng E."/>
            <person name="Nedjari H."/>
            <person name="Nordsiek G."/>
            <person name="Novella S."/>
            <person name="de Pablos B."/>
            <person name="Perez-Diaz J.-C."/>
            <person name="Purcell R."/>
            <person name="Remmel B."/>
            <person name="Rose M."/>
            <person name="Schlueter T."/>
            <person name="Simoes N."/>
            <person name="Tierrez A."/>
            <person name="Vazquez-Boland J.-A."/>
            <person name="Voss H."/>
            <person name="Wehland J."/>
            <person name="Cossart P."/>
        </authorList>
    </citation>
    <scope>NUCLEOTIDE SEQUENCE [LARGE SCALE GENOMIC DNA]</scope>
    <source>
        <strain>ATCC BAA-679 / EGD-e</strain>
    </source>
</reference>
<accession>Q8Y5L0</accession>
<protein>
    <recommendedName>
        <fullName evidence="1">tRNA(Met) cytidine acetate ligase</fullName>
        <ecNumber evidence="1">6.3.4.-</ecNumber>
    </recommendedName>
</protein>
<dbReference type="EC" id="6.3.4.-" evidence="1"/>
<dbReference type="EMBL" id="AL591982">
    <property type="protein sequence ID" value="CAD00127.1"/>
    <property type="molecule type" value="Genomic_DNA"/>
</dbReference>
<dbReference type="PIR" id="AI1330">
    <property type="entry name" value="AI1330"/>
</dbReference>
<dbReference type="RefSeq" id="NP_465573.1">
    <property type="nucleotide sequence ID" value="NC_003210.1"/>
</dbReference>
<dbReference type="RefSeq" id="WP_009930700.1">
    <property type="nucleotide sequence ID" value="NZ_CP149495.1"/>
</dbReference>
<dbReference type="SMR" id="Q8Y5L0"/>
<dbReference type="STRING" id="169963.gene:17594734"/>
<dbReference type="PaxDb" id="169963-lmo2049"/>
<dbReference type="EnsemblBacteria" id="CAD00127">
    <property type="protein sequence ID" value="CAD00127"/>
    <property type="gene ID" value="CAD00127"/>
</dbReference>
<dbReference type="GeneID" id="987928"/>
<dbReference type="KEGG" id="lmo:lmo2049"/>
<dbReference type="PATRIC" id="fig|169963.11.peg.2097"/>
<dbReference type="eggNOG" id="COG1323">
    <property type="taxonomic scope" value="Bacteria"/>
</dbReference>
<dbReference type="HOGENOM" id="CLU_038915_0_2_9"/>
<dbReference type="OrthoDB" id="9769796at2"/>
<dbReference type="PhylomeDB" id="Q8Y5L0"/>
<dbReference type="BioCyc" id="LMON169963:LMO2049-MONOMER"/>
<dbReference type="Proteomes" id="UP000000817">
    <property type="component" value="Chromosome"/>
</dbReference>
<dbReference type="GO" id="GO:0005737">
    <property type="term" value="C:cytoplasm"/>
    <property type="evidence" value="ECO:0007669"/>
    <property type="project" value="UniProtKB-SubCell"/>
</dbReference>
<dbReference type="GO" id="GO:0005524">
    <property type="term" value="F:ATP binding"/>
    <property type="evidence" value="ECO:0007669"/>
    <property type="project" value="UniProtKB-KW"/>
</dbReference>
<dbReference type="GO" id="GO:0016879">
    <property type="term" value="F:ligase activity, forming carbon-nitrogen bonds"/>
    <property type="evidence" value="ECO:0007669"/>
    <property type="project" value="UniProtKB-UniRule"/>
</dbReference>
<dbReference type="GO" id="GO:0000049">
    <property type="term" value="F:tRNA binding"/>
    <property type="evidence" value="ECO:0007669"/>
    <property type="project" value="UniProtKB-KW"/>
</dbReference>
<dbReference type="GO" id="GO:0006400">
    <property type="term" value="P:tRNA modification"/>
    <property type="evidence" value="ECO:0007669"/>
    <property type="project" value="UniProtKB-UniRule"/>
</dbReference>
<dbReference type="Gene3D" id="3.40.50.620">
    <property type="entry name" value="HUPs"/>
    <property type="match status" value="1"/>
</dbReference>
<dbReference type="HAMAP" id="MF_01539">
    <property type="entry name" value="TmcAL"/>
    <property type="match status" value="1"/>
</dbReference>
<dbReference type="InterPro" id="IPR014729">
    <property type="entry name" value="Rossmann-like_a/b/a_fold"/>
</dbReference>
<dbReference type="InterPro" id="IPR008513">
    <property type="entry name" value="tRNA(Met)_cyd_acetate_ligase"/>
</dbReference>
<dbReference type="NCBIfam" id="NF010191">
    <property type="entry name" value="PRK13670.1"/>
    <property type="match status" value="1"/>
</dbReference>
<dbReference type="PANTHER" id="PTHR37825">
    <property type="entry name" value="TRNA(MET) CYTIDINE ACETATE LIGASE"/>
    <property type="match status" value="1"/>
</dbReference>
<dbReference type="PANTHER" id="PTHR37825:SF1">
    <property type="entry name" value="TRNA(MET) CYTIDINE ACETATE LIGASE"/>
    <property type="match status" value="1"/>
</dbReference>
<dbReference type="Pfam" id="PF05636">
    <property type="entry name" value="HIGH_NTase1"/>
    <property type="match status" value="1"/>
</dbReference>
<dbReference type="SUPFAM" id="SSF52374">
    <property type="entry name" value="Nucleotidylyl transferase"/>
    <property type="match status" value="1"/>
</dbReference>
<evidence type="ECO:0000255" key="1">
    <source>
        <dbReference type="HAMAP-Rule" id="MF_01539"/>
    </source>
</evidence>